<comment type="function">
    <text evidence="3 4">SBP transcriptional regulator probably involved in the domestication of maize (PubMed:16079849). Acts as a transcriptional repressor binding to a 5'-GTAC-3' motif (PubMed:25943393). May repress the growth of lateral branches in length and numbers (PubMed:25943393).</text>
</comment>
<comment type="subunit">
    <text evidence="4">Monomer and homodimer.</text>
</comment>
<comment type="tissue specificity">
    <text evidence="3">Strongly expressed in immature ears and weakly in husks. Found in the inflorescence meristem of the developing ear, in the spikelet pair primordia, the glume primordia, the cupule forming region and other floral organs. Not detected in other tissues.</text>
</comment>
<comment type="domain">
    <text evidence="4">The N-terminal domain is necessary for dimerization.</text>
</comment>
<comment type="miscellaneous">
    <text evidence="3 4">A single Lys to Asn substitution at position 6 is the probable cause of the transition from the hardened fruitcase surrounding the kernels in teosinte to the cob that bears naked grains in maize. This substitution is not affecting the DNA binding site specificity, but increases the stability of the homodimers (PubMed:25943393).</text>
</comment>
<sequence>MDWDLNAAGAWDLAELEQDHAAAAPSSGGHAANAAAAGTGTESRPPAPGAAGAPAECSVDLKLGGMGECEPGAARREREAAAGAAKRPRPAGPGGQQQQQCPSCAVDGCRADLGKCRDYHRRHKVCEAHSKTPVVVVAGREMRFCQQCSRFHLLAEFDADKRSCRKRLDGHNRRRRKPQPDTMASASFIASQQGTRFSPFAHPRLEASWPPGVMKTEESPYHITHQIPLGSSSSSRQQHFVALGAATPAYAKEGRRFPFLQEGEISFATGVVLEPPAAAPACQPLLRTGAPSESSGAGGSKMFSDQGLARVLDSDCALSLLSAPANSSGIDVSRMVRPTEHVPMAQQPVVPGLQFGSASWFPRPQASTGGSFVPFCPAAVEGEQQLNAVLGPNDSEVSMNYGGMFHVGGGSGGGEGSSDGGTSSSMPFSWQ</sequence>
<organism evidence="6">
    <name type="scientific">Zea mays</name>
    <name type="common">Maize</name>
    <dbReference type="NCBI Taxonomy" id="4577"/>
    <lineage>
        <taxon>Eukaryota</taxon>
        <taxon>Viridiplantae</taxon>
        <taxon>Streptophyta</taxon>
        <taxon>Embryophyta</taxon>
        <taxon>Tracheophyta</taxon>
        <taxon>Spermatophyta</taxon>
        <taxon>Magnoliopsida</taxon>
        <taxon>Liliopsida</taxon>
        <taxon>Poales</taxon>
        <taxon>Poaceae</taxon>
        <taxon>PACMAD clade</taxon>
        <taxon>Panicoideae</taxon>
        <taxon>Andropogonodae</taxon>
        <taxon>Andropogoneae</taxon>
        <taxon>Tripsacinae</taxon>
        <taxon>Zea</taxon>
    </lineage>
</organism>
<name>TGA1W_MAIZE</name>
<keyword id="KW-0479">Metal-binding</keyword>
<keyword id="KW-1185">Reference proteome</keyword>
<keyword id="KW-0862">Zinc</keyword>
<keyword id="KW-0863">Zinc-finger</keyword>
<protein>
    <recommendedName>
        <fullName evidence="5">Teosinte glume architecture 1</fullName>
    </recommendedName>
</protein>
<dbReference type="EMBL" id="AY883560">
    <property type="protein sequence ID" value="AAX83873.1"/>
    <property type="molecule type" value="mRNA"/>
</dbReference>
<dbReference type="EMBL" id="AY883563">
    <property type="protein sequence ID" value="AAX83874.1"/>
    <property type="molecule type" value="Genomic_DNA"/>
</dbReference>
<dbReference type="EMBL" id="AY883561">
    <property type="protein sequence ID" value="AAX83874.1"/>
    <property type="status" value="JOINED"/>
    <property type="molecule type" value="Genomic_DNA"/>
</dbReference>
<dbReference type="EMBL" id="AY883562">
    <property type="protein sequence ID" value="AAX83874.1"/>
    <property type="status" value="JOINED"/>
    <property type="molecule type" value="Genomic_DNA"/>
</dbReference>
<dbReference type="SMR" id="Q49I55"/>
<dbReference type="STRING" id="4577.Q49I55"/>
<dbReference type="InParanoid" id="Q49I55"/>
<dbReference type="Proteomes" id="UP000007305">
    <property type="component" value="Unplaced"/>
</dbReference>
<dbReference type="ExpressionAtlas" id="Q49I55">
    <property type="expression patterns" value="baseline"/>
</dbReference>
<dbReference type="GO" id="GO:0005634">
    <property type="term" value="C:nucleus"/>
    <property type="evidence" value="ECO:0007669"/>
    <property type="project" value="InterPro"/>
</dbReference>
<dbReference type="GO" id="GO:0003677">
    <property type="term" value="F:DNA binding"/>
    <property type="evidence" value="ECO:0007669"/>
    <property type="project" value="InterPro"/>
</dbReference>
<dbReference type="GO" id="GO:0008270">
    <property type="term" value="F:zinc ion binding"/>
    <property type="evidence" value="ECO:0007669"/>
    <property type="project" value="UniProtKB-KW"/>
</dbReference>
<dbReference type="Gene3D" id="4.10.1100.10">
    <property type="entry name" value="Transcription factor, SBP-box domain"/>
    <property type="match status" value="1"/>
</dbReference>
<dbReference type="InterPro" id="IPR044817">
    <property type="entry name" value="SBP-like"/>
</dbReference>
<dbReference type="InterPro" id="IPR004333">
    <property type="entry name" value="SBP_dom"/>
</dbReference>
<dbReference type="InterPro" id="IPR036893">
    <property type="entry name" value="SBP_sf"/>
</dbReference>
<dbReference type="PANTHER" id="PTHR31251:SF33">
    <property type="entry name" value="SQUAMOSA PROMOTER-BINDING-LIKE PROTEIN 16"/>
    <property type="match status" value="1"/>
</dbReference>
<dbReference type="PANTHER" id="PTHR31251">
    <property type="entry name" value="SQUAMOSA PROMOTER-BINDING-LIKE PROTEIN 4"/>
    <property type="match status" value="1"/>
</dbReference>
<dbReference type="Pfam" id="PF03110">
    <property type="entry name" value="SBP"/>
    <property type="match status" value="1"/>
</dbReference>
<dbReference type="SUPFAM" id="SSF103612">
    <property type="entry name" value="SBT domain"/>
    <property type="match status" value="1"/>
</dbReference>
<dbReference type="PROSITE" id="PS51141">
    <property type="entry name" value="ZF_SBP"/>
    <property type="match status" value="1"/>
</dbReference>
<gene>
    <name evidence="5" type="primary">TGA1</name>
</gene>
<feature type="chain" id="PRO_0000434103" description="Teosinte glume architecture 1">
    <location>
        <begin position="1"/>
        <end position="431"/>
    </location>
</feature>
<feature type="zinc finger region" description="SBP-type" evidence="1">
    <location>
        <begin position="101"/>
        <end position="178"/>
    </location>
</feature>
<feature type="region of interest" description="Disordered" evidence="2">
    <location>
        <begin position="18"/>
        <end position="55"/>
    </location>
</feature>
<feature type="region of interest" description="Disordered" evidence="2">
    <location>
        <begin position="68"/>
        <end position="102"/>
    </location>
</feature>
<feature type="region of interest" description="Disordered" evidence="2">
    <location>
        <begin position="408"/>
        <end position="431"/>
    </location>
</feature>
<feature type="compositionally biased region" description="Low complexity" evidence="2">
    <location>
        <begin position="21"/>
        <end position="41"/>
    </location>
</feature>
<feature type="compositionally biased region" description="Gly residues" evidence="2">
    <location>
        <begin position="408"/>
        <end position="419"/>
    </location>
</feature>
<feature type="binding site" evidence="1">
    <location>
        <position position="104"/>
    </location>
    <ligand>
        <name>Zn(2+)</name>
        <dbReference type="ChEBI" id="CHEBI:29105"/>
        <label>1</label>
    </ligand>
</feature>
<feature type="binding site" evidence="1">
    <location>
        <position position="109"/>
    </location>
    <ligand>
        <name>Zn(2+)</name>
        <dbReference type="ChEBI" id="CHEBI:29105"/>
        <label>1</label>
    </ligand>
</feature>
<feature type="binding site" evidence="1">
    <location>
        <position position="126"/>
    </location>
    <ligand>
        <name>Zn(2+)</name>
        <dbReference type="ChEBI" id="CHEBI:29105"/>
        <label>1</label>
    </ligand>
</feature>
<feature type="binding site" evidence="1">
    <location>
        <position position="129"/>
    </location>
    <ligand>
        <name>Zn(2+)</name>
        <dbReference type="ChEBI" id="CHEBI:29105"/>
        <label>1</label>
    </ligand>
</feature>
<feature type="binding site" evidence="1">
    <location>
        <position position="145"/>
    </location>
    <ligand>
        <name>Zn(2+)</name>
        <dbReference type="ChEBI" id="CHEBI:29105"/>
        <label>2</label>
    </ligand>
</feature>
<feature type="binding site" evidence="1">
    <location>
        <position position="148"/>
    </location>
    <ligand>
        <name>Zn(2+)</name>
        <dbReference type="ChEBI" id="CHEBI:29105"/>
        <label>2</label>
    </ligand>
</feature>
<feature type="binding site" evidence="1">
    <location>
        <position position="152"/>
    </location>
    <ligand>
        <name>Zn(2+)</name>
        <dbReference type="ChEBI" id="CHEBI:29105"/>
        <label>2</label>
    </ligand>
</feature>
<feature type="binding site" evidence="1">
    <location>
        <position position="164"/>
    </location>
    <ligand>
        <name>Zn(2+)</name>
        <dbReference type="ChEBI" id="CHEBI:29105"/>
        <label>2</label>
    </ligand>
</feature>
<feature type="mutagenesis site" description="In tga1-ems1; encased kernels." evidence="3">
    <original>L</original>
    <variation>F</variation>
    <location>
        <position position="5"/>
    </location>
</feature>
<evidence type="ECO:0000255" key="1">
    <source>
        <dbReference type="PROSITE-ProRule" id="PRU00470"/>
    </source>
</evidence>
<evidence type="ECO:0000256" key="2">
    <source>
        <dbReference type="SAM" id="MobiDB-lite"/>
    </source>
</evidence>
<evidence type="ECO:0000269" key="3">
    <source>
    </source>
</evidence>
<evidence type="ECO:0000269" key="4">
    <source>
    </source>
</evidence>
<evidence type="ECO:0000303" key="5">
    <source>
    </source>
</evidence>
<evidence type="ECO:0000312" key="6">
    <source>
        <dbReference type="EMBL" id="AAX83874.1"/>
    </source>
</evidence>
<proteinExistence type="evidence at protein level"/>
<reference key="1">
    <citation type="journal article" date="2005" name="Nature">
        <title>The origin of the naked grains of maize.</title>
        <authorList>
            <person name="Wang H."/>
            <person name="Nussbaum-Wagler T."/>
            <person name="Li B."/>
            <person name="Zhao Q."/>
            <person name="Vigouroux Y."/>
            <person name="Faller M."/>
            <person name="Bomblies K."/>
            <person name="Lukens L."/>
            <person name="Doebley J.F."/>
        </authorList>
    </citation>
    <scope>NUCLEOTIDE SEQUENCE [GENOMIC DNA / MRNA]</scope>
    <scope>FUNCTION</scope>
    <scope>MUTAGENESIS OF LEU-5</scope>
    <scope>TISSUE SPECIFICITY</scope>
    <source>
        <strain>cv. Wisconsin 22</strain>
    </source>
</reference>
<reference key="2">
    <citation type="journal article" date="2015" name="Genetics">
        <title>Evidence that the origin of naked kernels during Maize domestication was caused by a single amino acid substitution in tga1.</title>
        <authorList>
            <person name="Wang H."/>
            <person name="Studer A.J."/>
            <person name="Zhao Q."/>
            <person name="Meeley R."/>
            <person name="Doebley J.F."/>
        </authorList>
    </citation>
    <scope>FUNCTION</scope>
    <scope>SUBUNIT</scope>
    <scope>DOMAIN</scope>
    <source>
        <strain>cv. Wisconsin 22</strain>
    </source>
</reference>
<accession>Q49I55</accession>